<proteinExistence type="inferred from homology"/>
<protein>
    <recommendedName>
        <fullName evidence="1">4-hydroxy-3-methylbut-2-en-1-yl diphosphate synthase (flavodoxin)</fullName>
        <ecNumber evidence="1">1.17.7.3</ecNumber>
    </recommendedName>
    <alternativeName>
        <fullName evidence="1">1-hydroxy-2-methyl-2-(E)-butenyl 4-diphosphate synthase</fullName>
    </alternativeName>
</protein>
<evidence type="ECO:0000255" key="1">
    <source>
        <dbReference type="HAMAP-Rule" id="MF_00159"/>
    </source>
</evidence>
<gene>
    <name evidence="1" type="primary">ispG</name>
    <name type="ordered locus">BcerKBAB4_4131</name>
</gene>
<accession>A9VH61</accession>
<keyword id="KW-0004">4Fe-4S</keyword>
<keyword id="KW-0408">Iron</keyword>
<keyword id="KW-0411">Iron-sulfur</keyword>
<keyword id="KW-0414">Isoprene biosynthesis</keyword>
<keyword id="KW-0479">Metal-binding</keyword>
<keyword id="KW-0560">Oxidoreductase</keyword>
<feature type="chain" id="PRO_1000097148" description="4-hydroxy-3-methylbut-2-en-1-yl diphosphate synthase (flavodoxin)">
    <location>
        <begin position="1"/>
        <end position="365"/>
    </location>
</feature>
<feature type="binding site" evidence="1">
    <location>
        <position position="265"/>
    </location>
    <ligand>
        <name>[4Fe-4S] cluster</name>
        <dbReference type="ChEBI" id="CHEBI:49883"/>
    </ligand>
</feature>
<feature type="binding site" evidence="1">
    <location>
        <position position="268"/>
    </location>
    <ligand>
        <name>[4Fe-4S] cluster</name>
        <dbReference type="ChEBI" id="CHEBI:49883"/>
    </ligand>
</feature>
<feature type="binding site" evidence="1">
    <location>
        <position position="300"/>
    </location>
    <ligand>
        <name>[4Fe-4S] cluster</name>
        <dbReference type="ChEBI" id="CHEBI:49883"/>
    </ligand>
</feature>
<feature type="binding site" evidence="1">
    <location>
        <position position="307"/>
    </location>
    <ligand>
        <name>[4Fe-4S] cluster</name>
        <dbReference type="ChEBI" id="CHEBI:49883"/>
    </ligand>
</feature>
<sequence>MTQRTKTRPVKVGNLTIGGNNELIIQSMTTTKTHDVEATVAEIKRLEEAGCQVVRVAVPDERAANAIADIKKQINIPLVADIHFDYRLALKAIEGGIDKVRINPGNIGRRHKVEAVVNAAKERGIPIRIGVNAGSLERHILEKYGYPTADGMVESALHHIKILEDLDFHDIIVSMKASDVNLAIEAYEKAARAFDYPLHLGITESGTLFAGTVKSAAGLGAILSKGIGNTLRISLSADPVEEVKVARELLKSFGLASNAATLISCPTCGRIEIDLISIANEVEEYISTLKVPIKVAVLGCAVNGPGEAREADIGIAGARGEGLLFRKGQVVRKVPEETMVEELKKEIDVIAAEMAAEREKEKQEQ</sequence>
<reference key="1">
    <citation type="journal article" date="2008" name="Chem. Biol. Interact.">
        <title>Extending the Bacillus cereus group genomics to putative food-borne pathogens of different toxicity.</title>
        <authorList>
            <person name="Lapidus A."/>
            <person name="Goltsman E."/>
            <person name="Auger S."/>
            <person name="Galleron N."/>
            <person name="Segurens B."/>
            <person name="Dossat C."/>
            <person name="Land M.L."/>
            <person name="Broussolle V."/>
            <person name="Brillard J."/>
            <person name="Guinebretiere M.-H."/>
            <person name="Sanchis V."/>
            <person name="Nguen-the C."/>
            <person name="Lereclus D."/>
            <person name="Richardson P."/>
            <person name="Wincker P."/>
            <person name="Weissenbach J."/>
            <person name="Ehrlich S.D."/>
            <person name="Sorokin A."/>
        </authorList>
    </citation>
    <scope>NUCLEOTIDE SEQUENCE [LARGE SCALE GENOMIC DNA]</scope>
    <source>
        <strain>KBAB4</strain>
    </source>
</reference>
<dbReference type="EC" id="1.17.7.3" evidence="1"/>
<dbReference type="EMBL" id="CP000903">
    <property type="protein sequence ID" value="ABY45293.1"/>
    <property type="molecule type" value="Genomic_DNA"/>
</dbReference>
<dbReference type="SMR" id="A9VH61"/>
<dbReference type="KEGG" id="bwe:BcerKBAB4_4131"/>
<dbReference type="eggNOG" id="COG0821">
    <property type="taxonomic scope" value="Bacteria"/>
</dbReference>
<dbReference type="HOGENOM" id="CLU_042258_0_0_9"/>
<dbReference type="UniPathway" id="UPA00056">
    <property type="reaction ID" value="UER00096"/>
</dbReference>
<dbReference type="Proteomes" id="UP000002154">
    <property type="component" value="Chromosome"/>
</dbReference>
<dbReference type="GO" id="GO:0051539">
    <property type="term" value="F:4 iron, 4 sulfur cluster binding"/>
    <property type="evidence" value="ECO:0007669"/>
    <property type="project" value="UniProtKB-UniRule"/>
</dbReference>
<dbReference type="GO" id="GO:0046429">
    <property type="term" value="F:4-hydroxy-3-methylbut-2-en-1-yl diphosphate synthase activity (ferredoxin)"/>
    <property type="evidence" value="ECO:0007669"/>
    <property type="project" value="UniProtKB-UniRule"/>
</dbReference>
<dbReference type="GO" id="GO:0141197">
    <property type="term" value="F:4-hydroxy-3-methylbut-2-enyl-diphosphate synthase activity (flavodoxin)"/>
    <property type="evidence" value="ECO:0007669"/>
    <property type="project" value="UniProtKB-EC"/>
</dbReference>
<dbReference type="GO" id="GO:0005506">
    <property type="term" value="F:iron ion binding"/>
    <property type="evidence" value="ECO:0007669"/>
    <property type="project" value="InterPro"/>
</dbReference>
<dbReference type="GO" id="GO:0019288">
    <property type="term" value="P:isopentenyl diphosphate biosynthetic process, methylerythritol 4-phosphate pathway"/>
    <property type="evidence" value="ECO:0007669"/>
    <property type="project" value="UniProtKB-UniRule"/>
</dbReference>
<dbReference type="GO" id="GO:0016114">
    <property type="term" value="P:terpenoid biosynthetic process"/>
    <property type="evidence" value="ECO:0007669"/>
    <property type="project" value="InterPro"/>
</dbReference>
<dbReference type="FunFam" id="3.20.20.20:FF:000001">
    <property type="entry name" value="4-hydroxy-3-methylbut-2-en-1-yl diphosphate synthase (flavodoxin)"/>
    <property type="match status" value="1"/>
</dbReference>
<dbReference type="FunFam" id="3.30.413.10:FF:000005">
    <property type="entry name" value="4-hydroxy-3-methylbut-2-en-1-yl diphosphate synthase (flavodoxin)"/>
    <property type="match status" value="1"/>
</dbReference>
<dbReference type="Gene3D" id="3.20.20.20">
    <property type="entry name" value="Dihydropteroate synthase-like"/>
    <property type="match status" value="1"/>
</dbReference>
<dbReference type="Gene3D" id="3.30.413.10">
    <property type="entry name" value="Sulfite Reductase Hemoprotein, domain 1"/>
    <property type="match status" value="1"/>
</dbReference>
<dbReference type="HAMAP" id="MF_00159">
    <property type="entry name" value="IspG"/>
    <property type="match status" value="1"/>
</dbReference>
<dbReference type="InterPro" id="IPR011005">
    <property type="entry name" value="Dihydropteroate_synth-like_sf"/>
</dbReference>
<dbReference type="InterPro" id="IPR016425">
    <property type="entry name" value="IspG_bac"/>
</dbReference>
<dbReference type="InterPro" id="IPR004588">
    <property type="entry name" value="IspG_bac-typ"/>
</dbReference>
<dbReference type="InterPro" id="IPR045854">
    <property type="entry name" value="NO2/SO3_Rdtase_4Fe4S_sf"/>
</dbReference>
<dbReference type="NCBIfam" id="TIGR00612">
    <property type="entry name" value="ispG_gcpE"/>
    <property type="match status" value="1"/>
</dbReference>
<dbReference type="NCBIfam" id="NF001540">
    <property type="entry name" value="PRK00366.1"/>
    <property type="match status" value="1"/>
</dbReference>
<dbReference type="PANTHER" id="PTHR30454">
    <property type="entry name" value="4-HYDROXY-3-METHYLBUT-2-EN-1-YL DIPHOSPHATE SYNTHASE"/>
    <property type="match status" value="1"/>
</dbReference>
<dbReference type="PANTHER" id="PTHR30454:SF0">
    <property type="entry name" value="4-HYDROXY-3-METHYLBUT-2-EN-1-YL DIPHOSPHATE SYNTHASE (FERREDOXIN), CHLOROPLASTIC"/>
    <property type="match status" value="1"/>
</dbReference>
<dbReference type="Pfam" id="PF04551">
    <property type="entry name" value="GcpE"/>
    <property type="match status" value="1"/>
</dbReference>
<dbReference type="PIRSF" id="PIRSF004640">
    <property type="entry name" value="IspG"/>
    <property type="match status" value="1"/>
</dbReference>
<dbReference type="SUPFAM" id="SSF51717">
    <property type="entry name" value="Dihydropteroate synthetase-like"/>
    <property type="match status" value="1"/>
</dbReference>
<dbReference type="SUPFAM" id="SSF56014">
    <property type="entry name" value="Nitrite and sulphite reductase 4Fe-4S domain-like"/>
    <property type="match status" value="1"/>
</dbReference>
<name>ISPG_BACMK</name>
<comment type="function">
    <text evidence="1">Converts 2C-methyl-D-erythritol 2,4-cyclodiphosphate (ME-2,4cPP) into 1-hydroxy-2-methyl-2-(E)-butenyl 4-diphosphate.</text>
</comment>
<comment type="catalytic activity">
    <reaction evidence="1">
        <text>(2E)-4-hydroxy-3-methylbut-2-enyl diphosphate + oxidized [flavodoxin] + H2O + 2 H(+) = 2-C-methyl-D-erythritol 2,4-cyclic diphosphate + reduced [flavodoxin]</text>
        <dbReference type="Rhea" id="RHEA:43604"/>
        <dbReference type="Rhea" id="RHEA-COMP:10622"/>
        <dbReference type="Rhea" id="RHEA-COMP:10623"/>
        <dbReference type="ChEBI" id="CHEBI:15377"/>
        <dbReference type="ChEBI" id="CHEBI:15378"/>
        <dbReference type="ChEBI" id="CHEBI:57618"/>
        <dbReference type="ChEBI" id="CHEBI:58210"/>
        <dbReference type="ChEBI" id="CHEBI:58483"/>
        <dbReference type="ChEBI" id="CHEBI:128753"/>
        <dbReference type="EC" id="1.17.7.3"/>
    </reaction>
</comment>
<comment type="cofactor">
    <cofactor evidence="1">
        <name>[4Fe-4S] cluster</name>
        <dbReference type="ChEBI" id="CHEBI:49883"/>
    </cofactor>
    <text evidence="1">Binds 1 [4Fe-4S] cluster.</text>
</comment>
<comment type="pathway">
    <text evidence="1">Isoprenoid biosynthesis; isopentenyl diphosphate biosynthesis via DXP pathway; isopentenyl diphosphate from 1-deoxy-D-xylulose 5-phosphate: step 5/6.</text>
</comment>
<comment type="similarity">
    <text evidence="1">Belongs to the IspG family.</text>
</comment>
<organism>
    <name type="scientific">Bacillus mycoides (strain KBAB4)</name>
    <name type="common">Bacillus weihenstephanensis</name>
    <dbReference type="NCBI Taxonomy" id="315730"/>
    <lineage>
        <taxon>Bacteria</taxon>
        <taxon>Bacillati</taxon>
        <taxon>Bacillota</taxon>
        <taxon>Bacilli</taxon>
        <taxon>Bacillales</taxon>
        <taxon>Bacillaceae</taxon>
        <taxon>Bacillus</taxon>
        <taxon>Bacillus cereus group</taxon>
    </lineage>
</organism>